<dbReference type="EC" id="7.4.2.8" evidence="1"/>
<dbReference type="EMBL" id="AE017321">
    <property type="protein sequence ID" value="AAW70855.1"/>
    <property type="status" value="ALT_INIT"/>
    <property type="molecule type" value="Genomic_DNA"/>
</dbReference>
<dbReference type="RefSeq" id="WP_011256465.1">
    <property type="nucleotide sequence ID" value="NC_006833.1"/>
</dbReference>
<dbReference type="SMR" id="Q5GT19"/>
<dbReference type="STRING" id="292805.Wbm0266"/>
<dbReference type="KEGG" id="wbm:Wbm0266"/>
<dbReference type="eggNOG" id="COG0653">
    <property type="taxonomic scope" value="Bacteria"/>
</dbReference>
<dbReference type="HOGENOM" id="CLU_005314_3_0_5"/>
<dbReference type="Proteomes" id="UP000000534">
    <property type="component" value="Chromosome"/>
</dbReference>
<dbReference type="GO" id="GO:0031522">
    <property type="term" value="C:cell envelope Sec protein transport complex"/>
    <property type="evidence" value="ECO:0007669"/>
    <property type="project" value="TreeGrafter"/>
</dbReference>
<dbReference type="GO" id="GO:0005829">
    <property type="term" value="C:cytosol"/>
    <property type="evidence" value="ECO:0007669"/>
    <property type="project" value="TreeGrafter"/>
</dbReference>
<dbReference type="GO" id="GO:0005886">
    <property type="term" value="C:plasma membrane"/>
    <property type="evidence" value="ECO:0007669"/>
    <property type="project" value="UniProtKB-SubCell"/>
</dbReference>
<dbReference type="GO" id="GO:0005524">
    <property type="term" value="F:ATP binding"/>
    <property type="evidence" value="ECO:0007669"/>
    <property type="project" value="UniProtKB-UniRule"/>
</dbReference>
<dbReference type="GO" id="GO:0046872">
    <property type="term" value="F:metal ion binding"/>
    <property type="evidence" value="ECO:0007669"/>
    <property type="project" value="UniProtKB-KW"/>
</dbReference>
<dbReference type="GO" id="GO:0008564">
    <property type="term" value="F:protein-exporting ATPase activity"/>
    <property type="evidence" value="ECO:0007669"/>
    <property type="project" value="UniProtKB-EC"/>
</dbReference>
<dbReference type="GO" id="GO:0065002">
    <property type="term" value="P:intracellular protein transmembrane transport"/>
    <property type="evidence" value="ECO:0007669"/>
    <property type="project" value="UniProtKB-UniRule"/>
</dbReference>
<dbReference type="GO" id="GO:0017038">
    <property type="term" value="P:protein import"/>
    <property type="evidence" value="ECO:0007669"/>
    <property type="project" value="InterPro"/>
</dbReference>
<dbReference type="GO" id="GO:0006605">
    <property type="term" value="P:protein targeting"/>
    <property type="evidence" value="ECO:0007669"/>
    <property type="project" value="UniProtKB-UniRule"/>
</dbReference>
<dbReference type="GO" id="GO:0043952">
    <property type="term" value="P:protein transport by the Sec complex"/>
    <property type="evidence" value="ECO:0007669"/>
    <property type="project" value="TreeGrafter"/>
</dbReference>
<dbReference type="CDD" id="cd17928">
    <property type="entry name" value="DEXDc_SecA"/>
    <property type="match status" value="1"/>
</dbReference>
<dbReference type="CDD" id="cd18803">
    <property type="entry name" value="SF2_C_secA"/>
    <property type="match status" value="1"/>
</dbReference>
<dbReference type="FunFam" id="3.40.50.300:FF:000113">
    <property type="entry name" value="Preprotein translocase subunit SecA"/>
    <property type="match status" value="1"/>
</dbReference>
<dbReference type="FunFam" id="3.90.1440.10:FF:000001">
    <property type="entry name" value="Preprotein translocase subunit SecA"/>
    <property type="match status" value="1"/>
</dbReference>
<dbReference type="FunFam" id="3.40.50.300:FF:000334">
    <property type="entry name" value="Protein translocase subunit SecA"/>
    <property type="match status" value="1"/>
</dbReference>
<dbReference type="Gene3D" id="1.10.3060.10">
    <property type="entry name" value="Helical scaffold and wing domains of SecA"/>
    <property type="match status" value="1"/>
</dbReference>
<dbReference type="Gene3D" id="3.40.50.300">
    <property type="entry name" value="P-loop containing nucleotide triphosphate hydrolases"/>
    <property type="match status" value="2"/>
</dbReference>
<dbReference type="Gene3D" id="3.90.1440.10">
    <property type="entry name" value="SecA, preprotein cross-linking domain"/>
    <property type="match status" value="1"/>
</dbReference>
<dbReference type="HAMAP" id="MF_01382">
    <property type="entry name" value="SecA"/>
    <property type="match status" value="1"/>
</dbReference>
<dbReference type="InterPro" id="IPR014001">
    <property type="entry name" value="Helicase_ATP-bd"/>
</dbReference>
<dbReference type="InterPro" id="IPR027417">
    <property type="entry name" value="P-loop_NTPase"/>
</dbReference>
<dbReference type="InterPro" id="IPR004027">
    <property type="entry name" value="SEC_C_motif"/>
</dbReference>
<dbReference type="InterPro" id="IPR000185">
    <property type="entry name" value="SecA"/>
</dbReference>
<dbReference type="InterPro" id="IPR020937">
    <property type="entry name" value="SecA_CS"/>
</dbReference>
<dbReference type="InterPro" id="IPR011115">
    <property type="entry name" value="SecA_DEAD"/>
</dbReference>
<dbReference type="InterPro" id="IPR014018">
    <property type="entry name" value="SecA_motor_DEAD"/>
</dbReference>
<dbReference type="InterPro" id="IPR011130">
    <property type="entry name" value="SecA_preprotein_X-link_dom"/>
</dbReference>
<dbReference type="InterPro" id="IPR044722">
    <property type="entry name" value="SecA_SF2_C"/>
</dbReference>
<dbReference type="InterPro" id="IPR011116">
    <property type="entry name" value="SecA_Wing/Scaffold"/>
</dbReference>
<dbReference type="InterPro" id="IPR036266">
    <property type="entry name" value="SecA_Wing/Scaffold_sf"/>
</dbReference>
<dbReference type="InterPro" id="IPR036670">
    <property type="entry name" value="SecA_X-link_sf"/>
</dbReference>
<dbReference type="NCBIfam" id="NF009538">
    <property type="entry name" value="PRK12904.1"/>
    <property type="match status" value="1"/>
</dbReference>
<dbReference type="NCBIfam" id="TIGR00963">
    <property type="entry name" value="secA"/>
    <property type="match status" value="1"/>
</dbReference>
<dbReference type="PANTHER" id="PTHR30612:SF0">
    <property type="entry name" value="CHLOROPLAST PROTEIN-TRANSPORTING ATPASE"/>
    <property type="match status" value="1"/>
</dbReference>
<dbReference type="PANTHER" id="PTHR30612">
    <property type="entry name" value="SECA INNER MEMBRANE COMPONENT OF SEC PROTEIN SECRETION SYSTEM"/>
    <property type="match status" value="1"/>
</dbReference>
<dbReference type="Pfam" id="PF21090">
    <property type="entry name" value="P-loop_SecA"/>
    <property type="match status" value="1"/>
</dbReference>
<dbReference type="Pfam" id="PF02810">
    <property type="entry name" value="SEC-C"/>
    <property type="match status" value="1"/>
</dbReference>
<dbReference type="Pfam" id="PF07517">
    <property type="entry name" value="SecA_DEAD"/>
    <property type="match status" value="1"/>
</dbReference>
<dbReference type="Pfam" id="PF01043">
    <property type="entry name" value="SecA_PP_bind"/>
    <property type="match status" value="1"/>
</dbReference>
<dbReference type="Pfam" id="PF07516">
    <property type="entry name" value="SecA_SW"/>
    <property type="match status" value="1"/>
</dbReference>
<dbReference type="PRINTS" id="PR00906">
    <property type="entry name" value="SECA"/>
</dbReference>
<dbReference type="SMART" id="SM00957">
    <property type="entry name" value="SecA_DEAD"/>
    <property type="match status" value="1"/>
</dbReference>
<dbReference type="SMART" id="SM00958">
    <property type="entry name" value="SecA_PP_bind"/>
    <property type="match status" value="1"/>
</dbReference>
<dbReference type="SUPFAM" id="SSF81886">
    <property type="entry name" value="Helical scaffold and wing domains of SecA"/>
    <property type="match status" value="1"/>
</dbReference>
<dbReference type="SUPFAM" id="SSF52540">
    <property type="entry name" value="P-loop containing nucleoside triphosphate hydrolases"/>
    <property type="match status" value="2"/>
</dbReference>
<dbReference type="SUPFAM" id="SSF81767">
    <property type="entry name" value="Pre-protein crosslinking domain of SecA"/>
    <property type="match status" value="1"/>
</dbReference>
<dbReference type="PROSITE" id="PS01312">
    <property type="entry name" value="SECA"/>
    <property type="match status" value="1"/>
</dbReference>
<dbReference type="PROSITE" id="PS51196">
    <property type="entry name" value="SECA_MOTOR_DEAD"/>
    <property type="match status" value="1"/>
</dbReference>
<feature type="chain" id="PRO_0000321040" description="Protein translocase subunit SecA">
    <location>
        <begin position="1"/>
        <end position="867"/>
    </location>
</feature>
<feature type="binding site" evidence="1">
    <location>
        <position position="86"/>
    </location>
    <ligand>
        <name>ATP</name>
        <dbReference type="ChEBI" id="CHEBI:30616"/>
    </ligand>
</feature>
<feature type="binding site" evidence="1">
    <location>
        <begin position="104"/>
        <end position="108"/>
    </location>
    <ligand>
        <name>ATP</name>
        <dbReference type="ChEBI" id="CHEBI:30616"/>
    </ligand>
</feature>
<feature type="binding site" evidence="1">
    <location>
        <position position="499"/>
    </location>
    <ligand>
        <name>ATP</name>
        <dbReference type="ChEBI" id="CHEBI:30616"/>
    </ligand>
</feature>
<feature type="binding site" evidence="1">
    <location>
        <position position="848"/>
    </location>
    <ligand>
        <name>Zn(2+)</name>
        <dbReference type="ChEBI" id="CHEBI:29105"/>
    </ligand>
</feature>
<feature type="binding site" evidence="1">
    <location>
        <position position="850"/>
    </location>
    <ligand>
        <name>Zn(2+)</name>
        <dbReference type="ChEBI" id="CHEBI:29105"/>
    </ligand>
</feature>
<feature type="binding site" evidence="1">
    <location>
        <position position="859"/>
    </location>
    <ligand>
        <name>Zn(2+)</name>
        <dbReference type="ChEBI" id="CHEBI:29105"/>
    </ligand>
</feature>
<feature type="binding site" evidence="1">
    <location>
        <position position="860"/>
    </location>
    <ligand>
        <name>Zn(2+)</name>
        <dbReference type="ChEBI" id="CHEBI:29105"/>
    </ligand>
</feature>
<gene>
    <name evidence="1" type="primary">secA</name>
    <name type="ordered locus">Wbm0266</name>
</gene>
<evidence type="ECO:0000255" key="1">
    <source>
        <dbReference type="HAMAP-Rule" id="MF_01382"/>
    </source>
</evidence>
<evidence type="ECO:0000305" key="2"/>
<comment type="function">
    <text evidence="1">Part of the Sec protein translocase complex. Interacts with the SecYEG preprotein conducting channel. Has a central role in coupling the hydrolysis of ATP to the transfer of proteins into and across the cell membrane, serving both as a receptor for the preprotein-SecB complex and as an ATP-driven molecular motor driving the stepwise translocation of polypeptide chains across the membrane.</text>
</comment>
<comment type="catalytic activity">
    <reaction evidence="1">
        <text>ATP + H2O + cellular proteinSide 1 = ADP + phosphate + cellular proteinSide 2.</text>
        <dbReference type="EC" id="7.4.2.8"/>
    </reaction>
</comment>
<comment type="cofactor">
    <cofactor evidence="1">
        <name>Zn(2+)</name>
        <dbReference type="ChEBI" id="CHEBI:29105"/>
    </cofactor>
    <text evidence="1">May bind 1 zinc ion per subunit.</text>
</comment>
<comment type="subunit">
    <text evidence="1">Monomer and homodimer. Part of the essential Sec protein translocation apparatus which comprises SecA, SecYEG and auxiliary proteins SecDF-YajC and YidC.</text>
</comment>
<comment type="subcellular location">
    <subcellularLocation>
        <location evidence="1">Cell membrane</location>
        <topology evidence="1">Peripheral membrane protein</topology>
        <orientation evidence="1">Cytoplasmic side</orientation>
    </subcellularLocation>
    <subcellularLocation>
        <location evidence="1">Cytoplasm</location>
    </subcellularLocation>
    <text evidence="1">Distribution is 50-50.</text>
</comment>
<comment type="similarity">
    <text evidence="1">Belongs to the SecA family.</text>
</comment>
<comment type="sequence caution" evidence="2">
    <conflict type="erroneous initiation">
        <sequence resource="EMBL-CDS" id="AAW70855"/>
    </conflict>
    <text>Extended N-terminus.</text>
</comment>
<proteinExistence type="inferred from homology"/>
<organism>
    <name type="scientific">Wolbachia sp. subsp. Brugia malayi (strain TRS)</name>
    <dbReference type="NCBI Taxonomy" id="292805"/>
    <lineage>
        <taxon>Bacteria</taxon>
        <taxon>Pseudomonadati</taxon>
        <taxon>Pseudomonadota</taxon>
        <taxon>Alphaproteobacteria</taxon>
        <taxon>Rickettsiales</taxon>
        <taxon>Anaplasmataceae</taxon>
        <taxon>Wolbachieae</taxon>
        <taxon>Wolbachia</taxon>
    </lineage>
</organism>
<accession>Q5GT19</accession>
<reference key="1">
    <citation type="journal article" date="2005" name="PLoS Biol.">
        <title>The Wolbachia genome of Brugia malayi: endosymbiont evolution within a human pathogenic nematode.</title>
        <authorList>
            <person name="Foster J."/>
            <person name="Ganatra M."/>
            <person name="Kamal I."/>
            <person name="Ware J."/>
            <person name="Makarova K."/>
            <person name="Ivanova N."/>
            <person name="Bhattacharyya A."/>
            <person name="Kapatral V."/>
            <person name="Kumar S."/>
            <person name="Posfai J."/>
            <person name="Vincze T."/>
            <person name="Ingram J."/>
            <person name="Moran L."/>
            <person name="Lapidus A."/>
            <person name="Omelchenko M."/>
            <person name="Kyrpides N."/>
            <person name="Ghedin E."/>
            <person name="Wang S."/>
            <person name="Goltsman E."/>
            <person name="Joukov V."/>
            <person name="Ostrovskaya O."/>
            <person name="Tsukerman K."/>
            <person name="Mazur M."/>
            <person name="Comb D."/>
            <person name="Koonin E."/>
            <person name="Slatko B."/>
        </authorList>
    </citation>
    <scope>NUCLEOTIDE SEQUENCE [LARGE SCALE GENOMIC DNA]</scope>
    <source>
        <strain>TRS</strain>
    </source>
</reference>
<sequence length="867" mass="99885">MSFFFKRTFGSINKKIIKSFRKIVEQINALETKMQSLSDEELADKTEEFKRELKNGKTLNDLLVPAFAVVREASRRFLNMRHFDVQLIGGMVLHNGMVSEMKTGEGKTLVATLAAYLNSLEGKGVHVVTVNDYLAKRDTEWMSKLYNSLGVSVAFITNDLTDEERKEAYSADIVYSTNNELAFDYLRDNMKFSREDMVQRGFNYAIVDEVDSILIDEARTPLIISGPVEENNQIYKHIDKIVTKLVDSDYEVDEKGRAVFLTEDGISQVEELLRSYNLISEKSSLYDAGNMIMTHYIDQALRAHKLFTADKDYIVKDGKVVIIDEFTGRMMEGRRYSDGLHQALEAKENLEIQYENQTLASVTFQNYFRMYNKLSGMTGTAATEAEELRDIYRLNVVKIPTNVTVKRIDVDDEIYGTEKEKFNAVLKFIKECHKRLQPVLVGTVSIENSEKLSALLRNHFLRHSVLNARYHEQEAYIIAQAGVPGNITIATNMAGRGTDIQLGGNAEMIAKVELKKIKNADEREKKYQEIIERVKRDKEIAMKAGGLCVIGTERHESRRIDDQLRGRSGRQGDPGLSKFFLSLEDDLMRIFGSDRMRSFLKRVGLKNNEAIHHPWINKALEKAQKKVEARNYDVRKSLLKFDDVINNQRKVIFEQRNHILGNEINDLFEVYSEVNKSVMESIVQGGYYEDYVEDIAKEFHIRYGITLDKKDLAKFLNKQEALDYINGKVKEFFTEKEKYFNGQQTTDLWNTIVKQVMIMTLDHLWREHLSILESLRQSIGLRAMGQKDPLNEFKREAFLIFECMLERGKELTIHRLAHFKLVDNQEVGGRLHPTRKDNLPKVSRNDKCPCNSGKKYKHCHGAVTVMN</sequence>
<protein>
    <recommendedName>
        <fullName evidence="1">Protein translocase subunit SecA</fullName>
        <ecNumber evidence="1">7.4.2.8</ecNumber>
    </recommendedName>
</protein>
<name>SECA_WOLTR</name>
<keyword id="KW-0067">ATP-binding</keyword>
<keyword id="KW-1003">Cell membrane</keyword>
<keyword id="KW-0963">Cytoplasm</keyword>
<keyword id="KW-0472">Membrane</keyword>
<keyword id="KW-0479">Metal-binding</keyword>
<keyword id="KW-0547">Nucleotide-binding</keyword>
<keyword id="KW-0653">Protein transport</keyword>
<keyword id="KW-1185">Reference proteome</keyword>
<keyword id="KW-1278">Translocase</keyword>
<keyword id="KW-0811">Translocation</keyword>
<keyword id="KW-0813">Transport</keyword>
<keyword id="KW-0862">Zinc</keyword>